<reference key="1">
    <citation type="journal article" date="1997" name="Nature">
        <title>The nucleotide sequence of Saccharomyces cerevisiae chromosome XV.</title>
        <authorList>
            <person name="Dujon B."/>
            <person name="Albermann K."/>
            <person name="Aldea M."/>
            <person name="Alexandraki D."/>
            <person name="Ansorge W."/>
            <person name="Arino J."/>
            <person name="Benes V."/>
            <person name="Bohn C."/>
            <person name="Bolotin-Fukuhara M."/>
            <person name="Bordonne R."/>
            <person name="Boyer J."/>
            <person name="Camasses A."/>
            <person name="Casamayor A."/>
            <person name="Casas C."/>
            <person name="Cheret G."/>
            <person name="Cziepluch C."/>
            <person name="Daignan-Fornier B."/>
            <person name="Dang V.-D."/>
            <person name="de Haan M."/>
            <person name="Delius H."/>
            <person name="Durand P."/>
            <person name="Fairhead C."/>
            <person name="Feldmann H."/>
            <person name="Gaillon L."/>
            <person name="Galisson F."/>
            <person name="Gamo F.-J."/>
            <person name="Gancedo C."/>
            <person name="Goffeau A."/>
            <person name="Goulding S.E."/>
            <person name="Grivell L.A."/>
            <person name="Habbig B."/>
            <person name="Hand N.J."/>
            <person name="Hani J."/>
            <person name="Hattenhorst U."/>
            <person name="Hebling U."/>
            <person name="Hernando Y."/>
            <person name="Herrero E."/>
            <person name="Heumann K."/>
            <person name="Hiesel R."/>
            <person name="Hilger F."/>
            <person name="Hofmann B."/>
            <person name="Hollenberg C.P."/>
            <person name="Hughes B."/>
            <person name="Jauniaux J.-C."/>
            <person name="Kalogeropoulos A."/>
            <person name="Katsoulou C."/>
            <person name="Kordes E."/>
            <person name="Lafuente M.J."/>
            <person name="Landt O."/>
            <person name="Louis E.J."/>
            <person name="Maarse A.C."/>
            <person name="Madania A."/>
            <person name="Mannhaupt G."/>
            <person name="Marck C."/>
            <person name="Martin R.P."/>
            <person name="Mewes H.-W."/>
            <person name="Michaux G."/>
            <person name="Paces V."/>
            <person name="Parle-McDermott A.G."/>
            <person name="Pearson B.M."/>
            <person name="Perrin A."/>
            <person name="Pettersson B."/>
            <person name="Poch O."/>
            <person name="Pohl T.M."/>
            <person name="Poirey R."/>
            <person name="Portetelle D."/>
            <person name="Pujol A."/>
            <person name="Purnelle B."/>
            <person name="Ramezani Rad M."/>
            <person name="Rechmann S."/>
            <person name="Schwager C."/>
            <person name="Schweizer M."/>
            <person name="Sor F."/>
            <person name="Sterky F."/>
            <person name="Tarassov I.A."/>
            <person name="Teodoru C."/>
            <person name="Tettelin H."/>
            <person name="Thierry A."/>
            <person name="Tobiasch E."/>
            <person name="Tzermia M."/>
            <person name="Uhlen M."/>
            <person name="Unseld M."/>
            <person name="Valens M."/>
            <person name="Vandenbol M."/>
            <person name="Vetter I."/>
            <person name="Vlcek C."/>
            <person name="Voet M."/>
            <person name="Volckaert G."/>
            <person name="Voss H."/>
            <person name="Wambutt R."/>
            <person name="Wedler H."/>
            <person name="Wiemann S."/>
            <person name="Winsor B."/>
            <person name="Wolfe K.H."/>
            <person name="Zollner A."/>
            <person name="Zumstein E."/>
            <person name="Kleine K."/>
        </authorList>
    </citation>
    <scope>NUCLEOTIDE SEQUENCE [LARGE SCALE GENOMIC DNA]</scope>
    <source>
        <strain>ATCC 204508 / S288c</strain>
    </source>
</reference>
<reference key="2">
    <citation type="journal article" date="2014" name="G3 (Bethesda)">
        <title>The reference genome sequence of Saccharomyces cerevisiae: Then and now.</title>
        <authorList>
            <person name="Engel S.R."/>
            <person name="Dietrich F.S."/>
            <person name="Fisk D.G."/>
            <person name="Binkley G."/>
            <person name="Balakrishnan R."/>
            <person name="Costanzo M.C."/>
            <person name="Dwight S.S."/>
            <person name="Hitz B.C."/>
            <person name="Karra K."/>
            <person name="Nash R.S."/>
            <person name="Weng S."/>
            <person name="Wong E.D."/>
            <person name="Lloyd P."/>
            <person name="Skrzypek M.S."/>
            <person name="Miyasato S.R."/>
            <person name="Simison M."/>
            <person name="Cherry J.M."/>
        </authorList>
    </citation>
    <scope>GENOME REANNOTATION</scope>
    <source>
        <strain>ATCC 204508 / S288c</strain>
    </source>
</reference>
<reference key="3">
    <citation type="journal article" date="1993" name="Mol. Cell. Biol.">
        <title>CYC2 encodes a factor involved in mitochondrial import of yeast cytochrome c.</title>
        <authorList>
            <person name="Dumont M.E."/>
            <person name="Schlichter J.B."/>
            <person name="Cardillo T.S."/>
            <person name="Hayes M.K."/>
            <person name="Bethlendy G."/>
            <person name="Sherman F."/>
        </authorList>
    </citation>
    <scope>NUCLEOTIDE SEQUENCE [GENOMIC DNA] OF 128-366</scope>
    <scope>SUBCELLULAR LOCATION</scope>
</reference>
<reference key="4">
    <citation type="journal article" date="2003" name="Nature">
        <title>Sequencing and comparison of yeast species to identify genes and regulatory elements.</title>
        <authorList>
            <person name="Kellis M."/>
            <person name="Patterson N."/>
            <person name="Endrizzi M."/>
            <person name="Birren B.W."/>
            <person name="Lander E.S."/>
        </authorList>
    </citation>
    <scope>IDENTIFICATION OF PROBABLE INITIATION SITE</scope>
</reference>
<reference key="5">
    <citation type="journal article" date="2003" name="Nature">
        <title>Global analysis of protein localization in budding yeast.</title>
        <authorList>
            <person name="Huh W.-K."/>
            <person name="Falvo J.V."/>
            <person name="Gerke L.C."/>
            <person name="Carroll A.S."/>
            <person name="Howson R.W."/>
            <person name="Weissman J.S."/>
            <person name="O'Shea E.K."/>
        </authorList>
    </citation>
    <scope>SUBCELLULAR LOCATION [LARGE SCALE ANALYSIS]</scope>
</reference>
<reference key="6">
    <citation type="journal article" date="2003" name="Nature">
        <title>Global analysis of protein expression in yeast.</title>
        <authorList>
            <person name="Ghaemmaghami S."/>
            <person name="Huh W.-K."/>
            <person name="Bower K."/>
            <person name="Howson R.W."/>
            <person name="Belle A."/>
            <person name="Dephoure N."/>
            <person name="O'Shea E.K."/>
            <person name="Weissman J.S."/>
        </authorList>
    </citation>
    <scope>LEVEL OF PROTEIN EXPRESSION [LARGE SCALE ANALYSIS]</scope>
</reference>
<reference key="7">
    <citation type="journal article" date="2003" name="Proc. Natl. Acad. Sci. U.S.A.">
        <title>The proteome of Saccharomyces cerevisiae mitochondria.</title>
        <authorList>
            <person name="Sickmann A."/>
            <person name="Reinders J."/>
            <person name="Wagner Y."/>
            <person name="Joppich C."/>
            <person name="Zahedi R.P."/>
            <person name="Meyer H.E."/>
            <person name="Schoenfisch B."/>
            <person name="Perschil I."/>
            <person name="Chacinska A."/>
            <person name="Guiard B."/>
            <person name="Rehling P."/>
            <person name="Pfanner N."/>
            <person name="Meisinger C."/>
        </authorList>
    </citation>
    <scope>SUBCELLULAR LOCATION [LARGE SCALE ANALYSIS]</scope>
    <source>
        <strain>ATCC 76625 / YPH499</strain>
    </source>
</reference>
<reference key="8">
    <citation type="journal article" date="2005" name="J. Biol. Chem.">
        <title>Cyc2p, a membrane-bound flavoprotein involved in the maturation of mitochondrial c-type cytochromes.</title>
        <authorList>
            <person name="Bernard D.G."/>
            <person name="Quevillon-Cheruel S."/>
            <person name="Merchant S."/>
            <person name="Guiard B."/>
            <person name="Hamel P.P."/>
        </authorList>
    </citation>
    <scope>FUNCTION</scope>
    <scope>SUBCELLULAR LOCATION</scope>
    <scope>FAD-BINDING</scope>
    <scope>BIOPHYSICOCHEMICAL PROPERTIES</scope>
</reference>
<name>CYC2_YEAST</name>
<sequence length="366" mass="42368">MLWKNYVLSSSRITRRLHKSPRKSSFSKNFFITGCLLTVGAVSSYLTYRYTSERENKHELSPSYFVKYKISHKRDIDSSHFLLEVTPLFKQKVNIWSLMTAENLWSVEIKQPEVMVVRNYTPLPLKFNPASKEIEILKDGDNADGKLSFYIKKYENGEVARWLHHLPKGHIIEIRGPFIDYEFPHLPNELKRSRDCLYMDNRNERGNNVRENSQFIYQPYDIMMFTAGTGIVTALQLLLTESPFRGTIKLFHTDKNIKQLGPLYPILLRLQASNRVQLKIFETDRQTKQDVLKSIQKSITKPYPYKGLLPFSNVNNKNIMPVLALVCGPESYISSISGRKYDLNQGPVGGLLSKEGWNSDNVYKLS</sequence>
<keyword id="KW-0274">FAD</keyword>
<keyword id="KW-0285">Flavoprotein</keyword>
<keyword id="KW-0472">Membrane</keyword>
<keyword id="KW-0496">Mitochondrion</keyword>
<keyword id="KW-0999">Mitochondrion inner membrane</keyword>
<keyword id="KW-0521">NADP</keyword>
<keyword id="KW-0560">Oxidoreductase</keyword>
<keyword id="KW-1185">Reference proteome</keyword>
<keyword id="KW-0809">Transit peptide</keyword>
<accession>P38909</accession>
<accession>D6W2A4</accession>
<feature type="transit peptide" description="Mitochondrion" evidence="1">
    <location>
        <begin position="1"/>
        <end position="50"/>
    </location>
</feature>
<feature type="chain" id="PRO_0000079749" description="Cytochrome c mitochondrial import factor CYC2">
    <location>
        <begin position="51"/>
        <end position="366"/>
    </location>
</feature>
<feature type="domain" description="FAD-binding FR-type" evidence="2">
    <location>
        <begin position="63"/>
        <end position="184"/>
    </location>
</feature>
<gene>
    <name type="primary">CYC2</name>
    <name type="ordered locus">YOR037W</name>
    <name type="ORF">OR26.30</name>
</gene>
<organism>
    <name type="scientific">Saccharomyces cerevisiae (strain ATCC 204508 / S288c)</name>
    <name type="common">Baker's yeast</name>
    <dbReference type="NCBI Taxonomy" id="559292"/>
    <lineage>
        <taxon>Eukaryota</taxon>
        <taxon>Fungi</taxon>
        <taxon>Dikarya</taxon>
        <taxon>Ascomycota</taxon>
        <taxon>Saccharomycotina</taxon>
        <taxon>Saccharomycetes</taxon>
        <taxon>Saccharomycetales</taxon>
        <taxon>Saccharomycetaceae</taxon>
        <taxon>Saccharomyces</taxon>
    </lineage>
</organism>
<protein>
    <recommendedName>
        <fullName>Cytochrome c mitochondrial import factor CYC2</fullName>
        <ecNumber>1.-.-.-</ecNumber>
    </recommendedName>
    <alternativeName>
        <fullName>Cytochrome c assembly flavoprotein CYC2</fullName>
    </alternativeName>
</protein>
<evidence type="ECO:0000255" key="1"/>
<evidence type="ECO:0000255" key="2">
    <source>
        <dbReference type="PROSITE-ProRule" id="PRU00716"/>
    </source>
</evidence>
<evidence type="ECO:0000269" key="3">
    <source>
    </source>
</evidence>
<evidence type="ECO:0000269" key="4">
    <source>
    </source>
</evidence>
<evidence type="ECO:0000269" key="5">
    <source>
    </source>
</evidence>
<evidence type="ECO:0000269" key="6">
    <source>
    </source>
</evidence>
<evidence type="ECO:0000269" key="7">
    <source>
    </source>
</evidence>
<evidence type="ECO:0000305" key="8"/>
<comment type="function">
    <text evidence="6">Redox component that participates in c-type cytochrome biogenesis in the mitochondrial intermembrane space. May play a role in the reduction of heme prior to its ligation to apocytochrome c by cytochrome c heme lyase. Has oxidoreductase activity in vitro.</text>
</comment>
<comment type="cofactor">
    <cofactor evidence="6">
        <name>FAD</name>
        <dbReference type="ChEBI" id="CHEBI:57692"/>
    </cofactor>
    <text evidence="6">Binds 1 FAD per monomer.</text>
</comment>
<comment type="biophysicochemical properties">
    <kinetics>
        <KM evidence="6">0.1 mM for NADPH</KM>
        <KM evidence="6">30 mM for NADH</KM>
    </kinetics>
</comment>
<comment type="subcellular location">
    <subcellularLocation>
        <location evidence="3 5 6 7">Mitochondrion inner membrane</location>
        <topology evidence="3 5 6 7">Peripheral membrane protein</topology>
        <orientation evidence="3 5 6 7">Intermembrane side</orientation>
    </subcellularLocation>
</comment>
<comment type="miscellaneous">
    <text evidence="4">Present with 2730 molecules/cell in log phase SD medium.</text>
</comment>
<comment type="sequence caution" evidence="8">
    <conflict type="frameshift">
        <sequence resource="EMBL-CDS" id="AAA72429"/>
    </conflict>
</comment>
<comment type="sequence caution" evidence="8">
    <conflict type="erroneous initiation">
        <sequence resource="EMBL-CDS" id="CAA60756"/>
    </conflict>
</comment>
<comment type="sequence caution" evidence="8">
    <conflict type="erroneous initiation">
        <sequence resource="EMBL-CDS" id="CAA99227"/>
    </conflict>
</comment>
<dbReference type="EC" id="1.-.-.-"/>
<dbReference type="EMBL" id="X87331">
    <property type="protein sequence ID" value="CAA60756.1"/>
    <property type="status" value="ALT_INIT"/>
    <property type="molecule type" value="Genomic_DNA"/>
</dbReference>
<dbReference type="EMBL" id="Z74945">
    <property type="protein sequence ID" value="CAA99227.1"/>
    <property type="status" value="ALT_INIT"/>
    <property type="molecule type" value="Genomic_DNA"/>
</dbReference>
<dbReference type="EMBL" id="L28428">
    <property type="protein sequence ID" value="AAA72429.1"/>
    <property type="status" value="ALT_FRAME"/>
    <property type="molecule type" value="Genomic_DNA"/>
</dbReference>
<dbReference type="EMBL" id="BK006948">
    <property type="protein sequence ID" value="DAA10820.1"/>
    <property type="molecule type" value="Genomic_DNA"/>
</dbReference>
<dbReference type="PIR" id="S62176">
    <property type="entry name" value="S62176"/>
</dbReference>
<dbReference type="RefSeq" id="NP_014680.2">
    <property type="nucleotide sequence ID" value="NM_001183456.1"/>
</dbReference>
<dbReference type="SMR" id="P38909"/>
<dbReference type="BioGRID" id="34439">
    <property type="interactions" value="178"/>
</dbReference>
<dbReference type="DIP" id="DIP-3836N"/>
<dbReference type="FunCoup" id="P38909">
    <property type="interactions" value="56"/>
</dbReference>
<dbReference type="STRING" id="4932.YOR037W"/>
<dbReference type="PaxDb" id="4932-YOR037W"/>
<dbReference type="PeptideAtlas" id="P38909"/>
<dbReference type="EnsemblFungi" id="YOR037W_mRNA">
    <property type="protein sequence ID" value="YOR037W"/>
    <property type="gene ID" value="YOR037W"/>
</dbReference>
<dbReference type="GeneID" id="854202"/>
<dbReference type="KEGG" id="sce:YOR037W"/>
<dbReference type="AGR" id="SGD:S000005563"/>
<dbReference type="SGD" id="S000005563">
    <property type="gene designation" value="CYC2"/>
</dbReference>
<dbReference type="VEuPathDB" id="FungiDB:YOR037W"/>
<dbReference type="eggNOG" id="KOG0534">
    <property type="taxonomic scope" value="Eukaryota"/>
</dbReference>
<dbReference type="HOGENOM" id="CLU_003827_6_2_1"/>
<dbReference type="InParanoid" id="P38909"/>
<dbReference type="OMA" id="VKQPEIM"/>
<dbReference type="OrthoDB" id="432685at2759"/>
<dbReference type="BioCyc" id="YEAST:G3O-33583-MONOMER"/>
<dbReference type="SABIO-RK" id="P38909"/>
<dbReference type="BioGRID-ORCS" id="854202">
    <property type="hits" value="3 hits in 10 CRISPR screens"/>
</dbReference>
<dbReference type="PRO" id="PR:P38909"/>
<dbReference type="Proteomes" id="UP000002311">
    <property type="component" value="Chromosome XV"/>
</dbReference>
<dbReference type="RNAct" id="P38909">
    <property type="molecule type" value="protein"/>
</dbReference>
<dbReference type="GO" id="GO:0005743">
    <property type="term" value="C:mitochondrial inner membrane"/>
    <property type="evidence" value="ECO:0000314"/>
    <property type="project" value="SGD"/>
</dbReference>
<dbReference type="GO" id="GO:0005739">
    <property type="term" value="C:mitochondrion"/>
    <property type="evidence" value="ECO:0007005"/>
    <property type="project" value="SGD"/>
</dbReference>
<dbReference type="GO" id="GO:0016491">
    <property type="term" value="F:oxidoreductase activity"/>
    <property type="evidence" value="ECO:0000314"/>
    <property type="project" value="SGD"/>
</dbReference>
<dbReference type="GO" id="GO:0007006">
    <property type="term" value="P:mitochondrial membrane organization"/>
    <property type="evidence" value="ECO:0000315"/>
    <property type="project" value="SGD"/>
</dbReference>
<dbReference type="CDD" id="cd06183">
    <property type="entry name" value="cyt_b5_reduct_like"/>
    <property type="match status" value="1"/>
</dbReference>
<dbReference type="Gene3D" id="2.40.30.10">
    <property type="entry name" value="Translation factors"/>
    <property type="match status" value="1"/>
</dbReference>
<dbReference type="InterPro" id="IPR001834">
    <property type="entry name" value="CBR-like"/>
</dbReference>
<dbReference type="InterPro" id="IPR008333">
    <property type="entry name" value="Cbr1-like_FAD-bd_dom"/>
</dbReference>
<dbReference type="InterPro" id="IPR017927">
    <property type="entry name" value="FAD-bd_FR_type"/>
</dbReference>
<dbReference type="InterPro" id="IPR017938">
    <property type="entry name" value="Riboflavin_synthase-like_b-brl"/>
</dbReference>
<dbReference type="PANTHER" id="PTHR19370:SF189">
    <property type="entry name" value="CYTOCHROME C MITOCHONDRIAL IMPORT FACTOR CYC2"/>
    <property type="match status" value="1"/>
</dbReference>
<dbReference type="PANTHER" id="PTHR19370">
    <property type="entry name" value="NADH-CYTOCHROME B5 REDUCTASE"/>
    <property type="match status" value="1"/>
</dbReference>
<dbReference type="Pfam" id="PF00970">
    <property type="entry name" value="FAD_binding_6"/>
    <property type="match status" value="1"/>
</dbReference>
<dbReference type="SUPFAM" id="SSF63380">
    <property type="entry name" value="Riboflavin synthase domain-like"/>
    <property type="match status" value="1"/>
</dbReference>
<dbReference type="PROSITE" id="PS51384">
    <property type="entry name" value="FAD_FR"/>
    <property type="match status" value="1"/>
</dbReference>
<proteinExistence type="evidence at protein level"/>